<sequence>MELHLALRASPLPAADPGRRPPPPRGNFATNCTAAINSTHISQEKFRSLDSWVEHNMLTFLKPVEKCWQPQDFLPDPSHLSAEELGDAVREIHERAAEIPDEVWVCMVGNMVTEEALPTYQSLISSVLGGTVAGSTPWDRWIRGWSAEENRHGDLLNKYLYLTGRLDMRQVEKTIQYLIGSGMDVGVGNSILCGFIYTCFQEKATFISHGNTARLAKHHGDTTLAKICGLVAADEKRHAVAYTNLMKKLFEVAPNESMLAFAHIMRAHVTMPASRMFDGRDPRLFTHFSAVTQKIGVYTVRDYGEMLDFFLKEWEISAVVDDLSPEGRQAQEYVCGLPEVMGKMAERADDRRKKLVNVGEPRYIPFSWIFNKQVCV</sequence>
<feature type="transit peptide" description="Chloroplast" evidence="2">
    <location>
        <begin position="1"/>
        <end position="33"/>
    </location>
</feature>
<feature type="chain" id="PRO_0000417064" description="Palmitoyl-[acyl-carrier-protein] 4-desaturase 2, chloroplastic">
    <location>
        <begin position="34"/>
        <end position="376"/>
    </location>
</feature>
<feature type="binding site" evidence="1">
    <location>
        <position position="114"/>
    </location>
    <ligand>
        <name>Fe cation</name>
        <dbReference type="ChEBI" id="CHEBI:24875"/>
        <label>1</label>
    </ligand>
</feature>
<feature type="binding site" evidence="1">
    <location>
        <position position="149"/>
    </location>
    <ligand>
        <name>Fe cation</name>
        <dbReference type="ChEBI" id="CHEBI:24875"/>
        <label>1</label>
    </ligand>
</feature>
<feature type="binding site" evidence="1">
    <location>
        <position position="149"/>
    </location>
    <ligand>
        <name>Fe cation</name>
        <dbReference type="ChEBI" id="CHEBI:24875"/>
        <label>2</label>
    </ligand>
</feature>
<feature type="binding site" evidence="1">
    <location>
        <position position="152"/>
    </location>
    <ligand>
        <name>Fe cation</name>
        <dbReference type="ChEBI" id="CHEBI:24875"/>
        <label>1</label>
    </ligand>
</feature>
<feature type="binding site" evidence="1">
    <location>
        <position position="202"/>
    </location>
    <ligand>
        <name>Fe cation</name>
        <dbReference type="ChEBI" id="CHEBI:24875"/>
        <label>2</label>
    </ligand>
</feature>
<feature type="binding site" evidence="1">
    <location>
        <position position="235"/>
    </location>
    <ligand>
        <name>Fe cation</name>
        <dbReference type="ChEBI" id="CHEBI:24875"/>
        <label>1</label>
    </ligand>
</feature>
<feature type="binding site" evidence="1">
    <location>
        <position position="235"/>
    </location>
    <ligand>
        <name>Fe cation</name>
        <dbReference type="ChEBI" id="CHEBI:24875"/>
        <label>2</label>
    </ligand>
</feature>
<feature type="binding site" evidence="1">
    <location>
        <position position="238"/>
    </location>
    <ligand>
        <name>Fe cation</name>
        <dbReference type="ChEBI" id="CHEBI:24875"/>
        <label>2</label>
    </ligand>
</feature>
<keyword id="KW-0150">Chloroplast</keyword>
<keyword id="KW-0275">Fatty acid biosynthesis</keyword>
<keyword id="KW-0276">Fatty acid metabolism</keyword>
<keyword id="KW-0408">Iron</keyword>
<keyword id="KW-0444">Lipid biosynthesis</keyword>
<keyword id="KW-0443">Lipid metabolism</keyword>
<keyword id="KW-0479">Metal-binding</keyword>
<keyword id="KW-0560">Oxidoreductase</keyword>
<keyword id="KW-0934">Plastid</keyword>
<keyword id="KW-0809">Transit peptide</keyword>
<proteinExistence type="evidence at protein level"/>
<accession>E3PZS2</accession>
<gene>
    <name type="primary">SAD2</name>
</gene>
<name>STAD2_OPHSP</name>
<dbReference type="EC" id="1.14.19.11" evidence="3"/>
<dbReference type="EC" id="1.14.19.2" evidence="3"/>
<dbReference type="EMBL" id="FR688109">
    <property type="protein sequence ID" value="CBW95566.1"/>
    <property type="molecule type" value="mRNA"/>
</dbReference>
<dbReference type="SMR" id="E3PZS2"/>
<dbReference type="UniPathway" id="UPA00199"/>
<dbReference type="GO" id="GO:0009570">
    <property type="term" value="C:chloroplast stroma"/>
    <property type="evidence" value="ECO:0007669"/>
    <property type="project" value="UniProtKB-SubCell"/>
</dbReference>
<dbReference type="GO" id="GO:0046872">
    <property type="term" value="F:metal ion binding"/>
    <property type="evidence" value="ECO:0007669"/>
    <property type="project" value="UniProtKB-KW"/>
</dbReference>
<dbReference type="GO" id="GO:0045300">
    <property type="term" value="F:stearoyl-[ACP] desaturase activity"/>
    <property type="evidence" value="ECO:0000314"/>
    <property type="project" value="UniProtKB"/>
</dbReference>
<dbReference type="GO" id="GO:0006636">
    <property type="term" value="P:unsaturated fatty acid biosynthetic process"/>
    <property type="evidence" value="ECO:0000314"/>
    <property type="project" value="UniProtKB"/>
</dbReference>
<dbReference type="CDD" id="cd01050">
    <property type="entry name" value="Acyl_ACP_Desat"/>
    <property type="match status" value="1"/>
</dbReference>
<dbReference type="FunFam" id="1.10.620.20:FF:000002">
    <property type="entry name" value="Stearoyl-[acyl-carrier-protein] 9-desaturase, chloroplastic"/>
    <property type="match status" value="1"/>
</dbReference>
<dbReference type="Gene3D" id="1.10.620.20">
    <property type="entry name" value="Ribonucleotide Reductase, subunit A"/>
    <property type="match status" value="1"/>
</dbReference>
<dbReference type="InterPro" id="IPR005067">
    <property type="entry name" value="Fatty_acid_desaturase-2"/>
</dbReference>
<dbReference type="InterPro" id="IPR009078">
    <property type="entry name" value="Ferritin-like_SF"/>
</dbReference>
<dbReference type="InterPro" id="IPR012348">
    <property type="entry name" value="RNR-like"/>
</dbReference>
<dbReference type="PANTHER" id="PTHR31155">
    <property type="entry name" value="ACYL- ACYL-CARRIER-PROTEIN DESATURASE-RELATED"/>
    <property type="match status" value="1"/>
</dbReference>
<dbReference type="PANTHER" id="PTHR31155:SF14">
    <property type="entry name" value="STEAROYL-ACYL-CARRIER-PROTEIN DESATURASE7"/>
    <property type="match status" value="1"/>
</dbReference>
<dbReference type="Pfam" id="PF03405">
    <property type="entry name" value="FA_desaturase_2"/>
    <property type="match status" value="1"/>
</dbReference>
<dbReference type="PIRSF" id="PIRSF000346">
    <property type="entry name" value="Dlt9_acylACP_des"/>
    <property type="match status" value="1"/>
</dbReference>
<dbReference type="SUPFAM" id="SSF47240">
    <property type="entry name" value="Ferritin-like"/>
    <property type="match status" value="1"/>
</dbReference>
<organism>
    <name type="scientific">Ophrys sphegodes</name>
    <name type="common">Early spider orchid</name>
    <name type="synonym">Arachnites aranifera</name>
    <dbReference type="NCBI Taxonomy" id="145953"/>
    <lineage>
        <taxon>Eukaryota</taxon>
        <taxon>Viridiplantae</taxon>
        <taxon>Streptophyta</taxon>
        <taxon>Embryophyta</taxon>
        <taxon>Tracheophyta</taxon>
        <taxon>Spermatophyta</taxon>
        <taxon>Magnoliopsida</taxon>
        <taxon>Liliopsida</taxon>
        <taxon>Asparagales</taxon>
        <taxon>Orchidaceae</taxon>
        <taxon>Orchidoideae</taxon>
        <taxon>Orchideae</taxon>
        <taxon>Orchidinae</taxon>
        <taxon>Ophrys</taxon>
    </lineage>
</organism>
<comment type="function">
    <text evidence="3">Converts stearoyl-ACP to oleoyl-ACP by introduction of a cis double bond between carbons 9 and 10 of the acyl chain. Converts palmitoyl-ACP to (4Z)-hexadec-4-enoyl-ACP by introduction of a cis double bond between carbons 4 and 5 of the acyl chain. Catalyzes the desaturation of saturated fatty acid 18:0 and 16:0 to generate 18:1 (delta-9) and 16:1 (delta-4) intermediates, expected to give rise to 9-alkenes and 12-alkenes, respectively.</text>
</comment>
<comment type="catalytic activity">
    <reaction evidence="3">
        <text>hexadecanoyl-[ACP] + 2 reduced [2Fe-2S]-[ferredoxin] + O2 + 2 H(+) = (4Z)-hexadecenoyl-[ACP] + 2 oxidized [2Fe-2S]-[ferredoxin] + 2 H2O</text>
        <dbReference type="Rhea" id="RHEA:38043"/>
        <dbReference type="Rhea" id="RHEA-COMP:9652"/>
        <dbReference type="Rhea" id="RHEA-COMP:10000"/>
        <dbReference type="Rhea" id="RHEA-COMP:10001"/>
        <dbReference type="Rhea" id="RHEA-COMP:11488"/>
        <dbReference type="ChEBI" id="CHEBI:15377"/>
        <dbReference type="ChEBI" id="CHEBI:15378"/>
        <dbReference type="ChEBI" id="CHEBI:15379"/>
        <dbReference type="ChEBI" id="CHEBI:33737"/>
        <dbReference type="ChEBI" id="CHEBI:33738"/>
        <dbReference type="ChEBI" id="CHEBI:78483"/>
        <dbReference type="ChEBI" id="CHEBI:85919"/>
        <dbReference type="EC" id="1.14.19.11"/>
    </reaction>
</comment>
<comment type="catalytic activity">
    <reaction evidence="3">
        <text>octadecanoyl-[ACP] + 2 reduced [2Fe-2S]-[ferredoxin] + O2 + 2 H(+) = (9Z)-octadecenoyl-[ACP] + 2 oxidized [2Fe-2S]-[ferredoxin] + 2 H2O</text>
        <dbReference type="Rhea" id="RHEA:11776"/>
        <dbReference type="Rhea" id="RHEA-COMP:9656"/>
        <dbReference type="Rhea" id="RHEA-COMP:9924"/>
        <dbReference type="Rhea" id="RHEA-COMP:10000"/>
        <dbReference type="Rhea" id="RHEA-COMP:10001"/>
        <dbReference type="ChEBI" id="CHEBI:15377"/>
        <dbReference type="ChEBI" id="CHEBI:15378"/>
        <dbReference type="ChEBI" id="CHEBI:15379"/>
        <dbReference type="ChEBI" id="CHEBI:33737"/>
        <dbReference type="ChEBI" id="CHEBI:33738"/>
        <dbReference type="ChEBI" id="CHEBI:78495"/>
        <dbReference type="ChEBI" id="CHEBI:78783"/>
        <dbReference type="EC" id="1.14.19.2"/>
    </reaction>
</comment>
<comment type="cofactor">
    <cofactor evidence="1">
        <name>Fe(2+)</name>
        <dbReference type="ChEBI" id="CHEBI:29033"/>
    </cofactor>
    <text evidence="1">Binds 2 Fe(2+) ions per subunit.</text>
</comment>
<comment type="pathway">
    <text>Lipid metabolism; fatty acid metabolism.</text>
</comment>
<comment type="subunit">
    <text evidence="1">Homodimer.</text>
</comment>
<comment type="subcellular location">
    <subcellularLocation>
        <location evidence="1">Plastid</location>
        <location evidence="1">Chloroplast stroma</location>
    </subcellularLocation>
</comment>
<comment type="tissue specificity">
    <text evidence="3">Preferentially expressed in the flower labellum.</text>
</comment>
<comment type="miscellaneous">
    <text evidence="5">Flowers 9-alkenes and 12-alkenes function as attractants to the pollinator Andrena nigroaenea by mimicry of the bee's sex pheromones.</text>
</comment>
<comment type="similarity">
    <text evidence="4">Belongs to the fatty acid desaturase type 2 family.</text>
</comment>
<comment type="online information" name="Protein Spotlight">
    <link uri="https://www.proteinspotlight.org/back_issues/145"/>
    <text>Unusual liaisons - Issue 145 of December 2012</text>
</comment>
<evidence type="ECO:0000250" key="1">
    <source>
        <dbReference type="UniProtKB" id="P22337"/>
    </source>
</evidence>
<evidence type="ECO:0000255" key="2"/>
<evidence type="ECO:0000269" key="3">
    <source>
    </source>
</evidence>
<evidence type="ECO:0000305" key="4"/>
<evidence type="ECO:0000305" key="5">
    <source>
    </source>
</evidence>
<protein>
    <recommendedName>
        <fullName>Palmitoyl-[acyl-carrier-protein] 4-desaturase 2, chloroplastic</fullName>
        <ecNumber evidence="3">1.14.19.11</ecNumber>
    </recommendedName>
    <alternativeName>
        <fullName>Acyl-[acyl-carrier-protein] desaturase 2</fullName>
    </alternativeName>
    <alternativeName>
        <fullName>Stearoyl-[acyl-carrier-protein] 9-desaturase 2</fullName>
        <shortName>Stearoyl-ACP desaturase 2</shortName>
        <ecNumber evidence="3">1.14.19.2</ecNumber>
    </alternativeName>
</protein>
<reference key="1">
    <citation type="journal article" date="2011" name="Proc. Natl. Acad. Sci. U.S.A.">
        <title>Stearoyl-acyl carrier protein desaturases are associated with floral isolation in sexually deceptive orchids.</title>
        <authorList>
            <person name="Schlueter P.M."/>
            <person name="Xu S."/>
            <person name="Gagliardini V."/>
            <person name="Whittle E."/>
            <person name="Shanklin J."/>
            <person name="Grossniklaus U."/>
            <person name="Schiestl F.P."/>
        </authorList>
    </citation>
    <scope>NUCLEOTIDE SEQUENCE [MRNA]</scope>
    <scope>FUNCTION</scope>
    <scope>CATALYTIC ACTIVITY</scope>
    <scope>TISSUE SPECIFICITY</scope>
    <source>
        <tissue>Flower</tissue>
    </source>
</reference>